<proteinExistence type="evidence at transcript level"/>
<dbReference type="EC" id="3.7.1.2" evidence="2"/>
<dbReference type="EMBL" id="AP004191">
    <property type="protein sequence ID" value="BAD25278.1"/>
    <property type="molecule type" value="Genomic_DNA"/>
</dbReference>
<dbReference type="EMBL" id="AP008208">
    <property type="protein sequence ID" value="BAF08109.1"/>
    <property type="molecule type" value="Genomic_DNA"/>
</dbReference>
<dbReference type="EMBL" id="AP014958">
    <property type="protein sequence ID" value="BAS77461.1"/>
    <property type="molecule type" value="Genomic_DNA"/>
</dbReference>
<dbReference type="EMBL" id="CM000139">
    <property type="protein sequence ID" value="EAZ22093.1"/>
    <property type="molecule type" value="Genomic_DNA"/>
</dbReference>
<dbReference type="EMBL" id="AK070521">
    <property type="protein sequence ID" value="BAG92005.1"/>
    <property type="molecule type" value="mRNA"/>
</dbReference>
<dbReference type="SMR" id="Q6H7M1"/>
<dbReference type="FunCoup" id="Q6H7M1">
    <property type="interactions" value="2560"/>
</dbReference>
<dbReference type="STRING" id="39947.Q6H7M1"/>
<dbReference type="PaxDb" id="39947-Q6H7M1"/>
<dbReference type="EnsemblPlants" id="Os02t0196800-01">
    <property type="protein sequence ID" value="Os02t0196800-01"/>
    <property type="gene ID" value="Os02g0196800"/>
</dbReference>
<dbReference type="GeneID" id="4328618"/>
<dbReference type="Gramene" id="Os02t0196800-01">
    <property type="protein sequence ID" value="Os02t0196800-01"/>
    <property type="gene ID" value="Os02g0196800"/>
</dbReference>
<dbReference type="KEGG" id="dosa:Os02g0196800"/>
<dbReference type="KEGG" id="osa:4328618"/>
<dbReference type="eggNOG" id="KOG2843">
    <property type="taxonomic scope" value="Eukaryota"/>
</dbReference>
<dbReference type="HOGENOM" id="CLU_026207_2_0_1"/>
<dbReference type="InParanoid" id="Q6H7M1"/>
<dbReference type="OMA" id="YWTAAQQ"/>
<dbReference type="OrthoDB" id="9971669at2759"/>
<dbReference type="PlantReactome" id="R-OSA-1119506">
    <property type="pathway name" value="tyrosine degradation I"/>
</dbReference>
<dbReference type="UniPathway" id="UPA00139">
    <property type="reaction ID" value="UER00341"/>
</dbReference>
<dbReference type="Proteomes" id="UP000000763">
    <property type="component" value="Chromosome 2"/>
</dbReference>
<dbReference type="Proteomes" id="UP000007752">
    <property type="component" value="Chromosome 2"/>
</dbReference>
<dbReference type="Proteomes" id="UP000059680">
    <property type="component" value="Chromosome 2"/>
</dbReference>
<dbReference type="ExpressionAtlas" id="Q6H7M1">
    <property type="expression patterns" value="baseline and differential"/>
</dbReference>
<dbReference type="GO" id="GO:0004334">
    <property type="term" value="F:fumarylacetoacetase activity"/>
    <property type="evidence" value="ECO:0000318"/>
    <property type="project" value="GO_Central"/>
</dbReference>
<dbReference type="GO" id="GO:0046872">
    <property type="term" value="F:metal ion binding"/>
    <property type="evidence" value="ECO:0007669"/>
    <property type="project" value="UniProtKB-KW"/>
</dbReference>
<dbReference type="GO" id="GO:1902000">
    <property type="term" value="P:homogentisate catabolic process"/>
    <property type="evidence" value="ECO:0000318"/>
    <property type="project" value="GO_Central"/>
</dbReference>
<dbReference type="GO" id="GO:0006559">
    <property type="term" value="P:L-phenylalanine catabolic process"/>
    <property type="evidence" value="ECO:0000318"/>
    <property type="project" value="GO_Central"/>
</dbReference>
<dbReference type="GO" id="GO:0006572">
    <property type="term" value="P:tyrosine catabolic process"/>
    <property type="evidence" value="ECO:0000318"/>
    <property type="project" value="GO_Central"/>
</dbReference>
<dbReference type="FunFam" id="2.30.30.230:FF:000002">
    <property type="entry name" value="Fumarylacetoacetase"/>
    <property type="match status" value="1"/>
</dbReference>
<dbReference type="FunFam" id="3.90.850.10:FF:000004">
    <property type="entry name" value="Fumarylacetoacetase"/>
    <property type="match status" value="1"/>
</dbReference>
<dbReference type="Gene3D" id="2.30.30.230">
    <property type="entry name" value="Fumarylacetoacetase, N-terminal domain"/>
    <property type="match status" value="1"/>
</dbReference>
<dbReference type="Gene3D" id="3.90.850.10">
    <property type="entry name" value="Fumarylacetoacetase-like, C-terminal domain"/>
    <property type="match status" value="1"/>
</dbReference>
<dbReference type="InterPro" id="IPR005959">
    <property type="entry name" value="Fumarylacetoacetase"/>
</dbReference>
<dbReference type="InterPro" id="IPR011234">
    <property type="entry name" value="Fumarylacetoacetase-like_C"/>
</dbReference>
<dbReference type="InterPro" id="IPR036663">
    <property type="entry name" value="Fumarylacetoacetase_C_sf"/>
</dbReference>
<dbReference type="InterPro" id="IPR015377">
    <property type="entry name" value="Fumarylacetoacetase_N"/>
</dbReference>
<dbReference type="InterPro" id="IPR036462">
    <property type="entry name" value="Fumarylacetoacetase_N_sf"/>
</dbReference>
<dbReference type="NCBIfam" id="TIGR01266">
    <property type="entry name" value="fum_ac_acetase"/>
    <property type="match status" value="1"/>
</dbReference>
<dbReference type="PANTHER" id="PTHR43069">
    <property type="entry name" value="FUMARYLACETOACETASE"/>
    <property type="match status" value="1"/>
</dbReference>
<dbReference type="PANTHER" id="PTHR43069:SF2">
    <property type="entry name" value="FUMARYLACETOACETASE"/>
    <property type="match status" value="1"/>
</dbReference>
<dbReference type="Pfam" id="PF01557">
    <property type="entry name" value="FAA_hydrolase"/>
    <property type="match status" value="1"/>
</dbReference>
<dbReference type="Pfam" id="PF09298">
    <property type="entry name" value="FAA_hydrolase_N"/>
    <property type="match status" value="1"/>
</dbReference>
<dbReference type="SUPFAM" id="SSF56529">
    <property type="entry name" value="FAH"/>
    <property type="match status" value="1"/>
</dbReference>
<dbReference type="SUPFAM" id="SSF63433">
    <property type="entry name" value="Fumarylacetoacetate hydrolase, FAH, N-terminal domain"/>
    <property type="match status" value="1"/>
</dbReference>
<sequence length="429" mass="47105">MAEGSRSPLRSFVEVAPGSHFPIQNLPFGVFRRRGSPEPEPPRPAVAIGDFALDLAAVSDAGLFHGPLLSASPCFRQETLNMFLGMGRPAWKEARATLQKILSADEPVLRDNEALKKKCLVPMSDTEMLLPITVGDYTDFFCSVHHARNCGFIFRGPQTPVNPNWFQLPVGYHGRASSVIVSGTDIIRPKGQGHPTGDSRPYFGPSKKLDFELEMAAIVGPGNELGKPIDINDAEEHIFGLMIMNDWSARDIQAWETIPLGPFLGKSFSTTVSPWIVTMDALKPFTCEAPKQEPEPLPYLAEKNHVNYDIPLEVWIKPKEQSEPSMVAKSNFKHLYWTLTQQLAHHTVNGCNLRPGDMFATGTLSGPETESLGCLLELTWNGQKEISVGNSTRKFLEDGDEVILTACCKGEGYNVGFGTCTGKVLPALP</sequence>
<gene>
    <name evidence="3" type="primary">FAH</name>
    <name evidence="5" type="ordered locus">Os02g0196800</name>
    <name evidence="3" type="ordered locus">LOC_Os02g10310</name>
    <name evidence="4" type="ORF">OJ1524_D08.17</name>
    <name evidence="6" type="ORF">OsJ_05754</name>
</gene>
<reference key="1">
    <citation type="journal article" date="2005" name="Nature">
        <title>The map-based sequence of the rice genome.</title>
        <authorList>
            <consortium name="International rice genome sequencing project (IRGSP)"/>
        </authorList>
    </citation>
    <scope>NUCLEOTIDE SEQUENCE [LARGE SCALE GENOMIC DNA]</scope>
    <source>
        <strain>cv. Nipponbare</strain>
    </source>
</reference>
<reference key="2">
    <citation type="journal article" date="2008" name="Nucleic Acids Res.">
        <title>The rice annotation project database (RAP-DB): 2008 update.</title>
        <authorList>
            <consortium name="The rice annotation project (RAP)"/>
        </authorList>
    </citation>
    <scope>GENOME REANNOTATION</scope>
    <source>
        <strain>cv. Nipponbare</strain>
    </source>
</reference>
<reference key="3">
    <citation type="journal article" date="2013" name="Rice">
        <title>Improvement of the Oryza sativa Nipponbare reference genome using next generation sequence and optical map data.</title>
        <authorList>
            <person name="Kawahara Y."/>
            <person name="de la Bastide M."/>
            <person name="Hamilton J.P."/>
            <person name="Kanamori H."/>
            <person name="McCombie W.R."/>
            <person name="Ouyang S."/>
            <person name="Schwartz D.C."/>
            <person name="Tanaka T."/>
            <person name="Wu J."/>
            <person name="Zhou S."/>
            <person name="Childs K.L."/>
            <person name="Davidson R.M."/>
            <person name="Lin H."/>
            <person name="Quesada-Ocampo L."/>
            <person name="Vaillancourt B."/>
            <person name="Sakai H."/>
            <person name="Lee S.S."/>
            <person name="Kim J."/>
            <person name="Numa H."/>
            <person name="Itoh T."/>
            <person name="Buell C.R."/>
            <person name="Matsumoto T."/>
        </authorList>
    </citation>
    <scope>GENOME REANNOTATION</scope>
    <source>
        <strain>cv. Nipponbare</strain>
    </source>
</reference>
<reference key="4">
    <citation type="journal article" date="2005" name="PLoS Biol.">
        <title>The genomes of Oryza sativa: a history of duplications.</title>
        <authorList>
            <person name="Yu J."/>
            <person name="Wang J."/>
            <person name="Lin W."/>
            <person name="Li S."/>
            <person name="Li H."/>
            <person name="Zhou J."/>
            <person name="Ni P."/>
            <person name="Dong W."/>
            <person name="Hu S."/>
            <person name="Zeng C."/>
            <person name="Zhang J."/>
            <person name="Zhang Y."/>
            <person name="Li R."/>
            <person name="Xu Z."/>
            <person name="Li S."/>
            <person name="Li X."/>
            <person name="Zheng H."/>
            <person name="Cong L."/>
            <person name="Lin L."/>
            <person name="Yin J."/>
            <person name="Geng J."/>
            <person name="Li G."/>
            <person name="Shi J."/>
            <person name="Liu J."/>
            <person name="Lv H."/>
            <person name="Li J."/>
            <person name="Wang J."/>
            <person name="Deng Y."/>
            <person name="Ran L."/>
            <person name="Shi X."/>
            <person name="Wang X."/>
            <person name="Wu Q."/>
            <person name="Li C."/>
            <person name="Ren X."/>
            <person name="Wang J."/>
            <person name="Wang X."/>
            <person name="Li D."/>
            <person name="Liu D."/>
            <person name="Zhang X."/>
            <person name="Ji Z."/>
            <person name="Zhao W."/>
            <person name="Sun Y."/>
            <person name="Zhang Z."/>
            <person name="Bao J."/>
            <person name="Han Y."/>
            <person name="Dong L."/>
            <person name="Ji J."/>
            <person name="Chen P."/>
            <person name="Wu S."/>
            <person name="Liu J."/>
            <person name="Xiao Y."/>
            <person name="Bu D."/>
            <person name="Tan J."/>
            <person name="Yang L."/>
            <person name="Ye C."/>
            <person name="Zhang J."/>
            <person name="Xu J."/>
            <person name="Zhou Y."/>
            <person name="Yu Y."/>
            <person name="Zhang B."/>
            <person name="Zhuang S."/>
            <person name="Wei H."/>
            <person name="Liu B."/>
            <person name="Lei M."/>
            <person name="Yu H."/>
            <person name="Li Y."/>
            <person name="Xu H."/>
            <person name="Wei S."/>
            <person name="He X."/>
            <person name="Fang L."/>
            <person name="Zhang Z."/>
            <person name="Zhang Y."/>
            <person name="Huang X."/>
            <person name="Su Z."/>
            <person name="Tong W."/>
            <person name="Li J."/>
            <person name="Tong Z."/>
            <person name="Li S."/>
            <person name="Ye J."/>
            <person name="Wang L."/>
            <person name="Fang L."/>
            <person name="Lei T."/>
            <person name="Chen C.-S."/>
            <person name="Chen H.-C."/>
            <person name="Xu Z."/>
            <person name="Li H."/>
            <person name="Huang H."/>
            <person name="Zhang F."/>
            <person name="Xu H."/>
            <person name="Li N."/>
            <person name="Zhao C."/>
            <person name="Li S."/>
            <person name="Dong L."/>
            <person name="Huang Y."/>
            <person name="Li L."/>
            <person name="Xi Y."/>
            <person name="Qi Q."/>
            <person name="Li W."/>
            <person name="Zhang B."/>
            <person name="Hu W."/>
            <person name="Zhang Y."/>
            <person name="Tian X."/>
            <person name="Jiao Y."/>
            <person name="Liang X."/>
            <person name="Jin J."/>
            <person name="Gao L."/>
            <person name="Zheng W."/>
            <person name="Hao B."/>
            <person name="Liu S.-M."/>
            <person name="Wang W."/>
            <person name="Yuan L."/>
            <person name="Cao M."/>
            <person name="McDermott J."/>
            <person name="Samudrala R."/>
            <person name="Wang J."/>
            <person name="Wong G.K.-S."/>
            <person name="Yang H."/>
        </authorList>
    </citation>
    <scope>NUCLEOTIDE SEQUENCE [LARGE SCALE GENOMIC DNA]</scope>
    <source>
        <strain>cv. Nipponbare</strain>
    </source>
</reference>
<reference key="5">
    <citation type="journal article" date="2003" name="Science">
        <title>Collection, mapping, and annotation of over 28,000 cDNA clones from japonica rice.</title>
        <authorList>
            <consortium name="The rice full-length cDNA consortium"/>
        </authorList>
    </citation>
    <scope>NUCLEOTIDE SEQUENCE [LARGE SCALE MRNA]</scope>
    <source>
        <strain>cv. Nipponbare</strain>
    </source>
</reference>
<accession>Q6H7M1</accession>
<comment type="function">
    <text evidence="2">Converts fumarylacetoacetate to acetoacetate and fumarate. Involved in tyrosine catabolic pathway. Catalyzes the final step in the tyrosine degradation pathway.</text>
</comment>
<comment type="catalytic activity">
    <reaction evidence="2">
        <text>4-fumarylacetoacetate + H2O = acetoacetate + fumarate + H(+)</text>
        <dbReference type="Rhea" id="RHEA:10244"/>
        <dbReference type="ChEBI" id="CHEBI:13705"/>
        <dbReference type="ChEBI" id="CHEBI:15377"/>
        <dbReference type="ChEBI" id="CHEBI:15378"/>
        <dbReference type="ChEBI" id="CHEBI:18034"/>
        <dbReference type="ChEBI" id="CHEBI:29806"/>
        <dbReference type="EC" id="3.7.1.2"/>
    </reaction>
</comment>
<comment type="cofactor">
    <cofactor evidence="1">
        <name>Ca(2+)</name>
        <dbReference type="ChEBI" id="CHEBI:29108"/>
    </cofactor>
</comment>
<comment type="cofactor">
    <cofactor evidence="1">
        <name>Mg(2+)</name>
        <dbReference type="ChEBI" id="CHEBI:18420"/>
    </cofactor>
</comment>
<comment type="pathway">
    <text evidence="3">Amino-acid degradation; L-phenylalanine degradation; acetoacetate and fumarate from L-phenylalanine: step 6/6.</text>
</comment>
<comment type="similarity">
    <text evidence="3">Belongs to the FAH family.</text>
</comment>
<keyword id="KW-0106">Calcium</keyword>
<keyword id="KW-0378">Hydrolase</keyword>
<keyword id="KW-0460">Magnesium</keyword>
<keyword id="KW-0479">Metal-binding</keyword>
<keyword id="KW-0585">Phenylalanine catabolism</keyword>
<keyword id="KW-1185">Reference proteome</keyword>
<keyword id="KW-0828">Tyrosine catabolism</keyword>
<name>FAH_ORYSJ</name>
<feature type="chain" id="PRO_0000442049" description="Fumarylacetoacetase">
    <location>
        <begin position="1"/>
        <end position="429"/>
    </location>
</feature>
<feature type="active site" description="Proton acceptor" evidence="1">
    <location>
        <position position="146"/>
    </location>
</feature>
<feature type="binding site" evidence="1">
    <location>
        <position position="139"/>
    </location>
    <ligand>
        <name>Ca(2+)</name>
        <dbReference type="ChEBI" id="CHEBI:29108"/>
    </ligand>
</feature>
<feature type="binding site" evidence="1">
    <location>
        <position position="155"/>
    </location>
    <ligand>
        <name>substrate</name>
    </ligand>
</feature>
<feature type="binding site" evidence="1">
    <location>
        <position position="212"/>
    </location>
    <ligand>
        <name>Ca(2+)</name>
        <dbReference type="ChEBI" id="CHEBI:29108"/>
    </ligand>
</feature>
<feature type="binding site" evidence="1">
    <location>
        <position position="214"/>
    </location>
    <ligand>
        <name>Ca(2+)</name>
        <dbReference type="ChEBI" id="CHEBI:29108"/>
    </ligand>
</feature>
<feature type="binding site" evidence="1">
    <location>
        <position position="246"/>
    </location>
    <ligand>
        <name>Ca(2+)</name>
        <dbReference type="ChEBI" id="CHEBI:29108"/>
    </ligand>
</feature>
<feature type="binding site" evidence="1">
    <location>
        <position position="246"/>
    </location>
    <ligand>
        <name>Mg(2+)</name>
        <dbReference type="ChEBI" id="CHEBI:18420"/>
    </ligand>
</feature>
<feature type="binding site" evidence="1">
    <location>
        <position position="253"/>
    </location>
    <ligand>
        <name>substrate</name>
    </ligand>
</feature>
<feature type="binding site" evidence="1">
    <location>
        <position position="266"/>
    </location>
    <ligand>
        <name>Mg(2+)</name>
        <dbReference type="ChEBI" id="CHEBI:18420"/>
    </ligand>
</feature>
<feature type="binding site" evidence="1">
    <location>
        <position position="270"/>
    </location>
    <ligand>
        <name>Mg(2+)</name>
        <dbReference type="ChEBI" id="CHEBI:18420"/>
    </ligand>
</feature>
<feature type="binding site" evidence="1">
    <location>
        <position position="363"/>
    </location>
    <ligand>
        <name>substrate</name>
    </ligand>
</feature>
<protein>
    <recommendedName>
        <fullName evidence="3">Fumarylacetoacetase</fullName>
        <ecNumber evidence="2">3.7.1.2</ecNumber>
    </recommendedName>
    <alternativeName>
        <fullName evidence="3">Fumarylacetoacetate hydrolase</fullName>
    </alternativeName>
</protein>
<organism>
    <name type="scientific">Oryza sativa subsp. japonica</name>
    <name type="common">Rice</name>
    <dbReference type="NCBI Taxonomy" id="39947"/>
    <lineage>
        <taxon>Eukaryota</taxon>
        <taxon>Viridiplantae</taxon>
        <taxon>Streptophyta</taxon>
        <taxon>Embryophyta</taxon>
        <taxon>Tracheophyta</taxon>
        <taxon>Spermatophyta</taxon>
        <taxon>Magnoliopsida</taxon>
        <taxon>Liliopsida</taxon>
        <taxon>Poales</taxon>
        <taxon>Poaceae</taxon>
        <taxon>BOP clade</taxon>
        <taxon>Oryzoideae</taxon>
        <taxon>Oryzeae</taxon>
        <taxon>Oryzinae</taxon>
        <taxon>Oryza</taxon>
        <taxon>Oryza sativa</taxon>
    </lineage>
</organism>
<evidence type="ECO:0000250" key="1">
    <source>
        <dbReference type="UniProtKB" id="P35505"/>
    </source>
</evidence>
<evidence type="ECO:0000250" key="2">
    <source>
        <dbReference type="UniProtKB" id="Q8RW90"/>
    </source>
</evidence>
<evidence type="ECO:0000305" key="3"/>
<evidence type="ECO:0000312" key="4">
    <source>
        <dbReference type="EMBL" id="BAD25278.1"/>
    </source>
</evidence>
<evidence type="ECO:0000312" key="5">
    <source>
        <dbReference type="EMBL" id="BAF08109.1"/>
    </source>
</evidence>
<evidence type="ECO:0000312" key="6">
    <source>
        <dbReference type="EMBL" id="EAZ22093.1"/>
    </source>
</evidence>